<accession>P96800</accession>
<accession>Q46C44</accession>
<dbReference type="EMBL" id="CP000099">
    <property type="protein sequence ID" value="AAZ70548.1"/>
    <property type="molecule type" value="Genomic_DNA"/>
</dbReference>
<dbReference type="EMBL" id="Y09870">
    <property type="protein sequence ID" value="CAA70994.1"/>
    <property type="status" value="ALT_FRAME"/>
    <property type="molecule type" value="Genomic_DNA"/>
</dbReference>
<dbReference type="SMR" id="P96800"/>
<dbReference type="STRING" id="269797.Mbar_A1602"/>
<dbReference type="PaxDb" id="269797-Mbar_A1602"/>
<dbReference type="KEGG" id="mba:Mbar_A1602"/>
<dbReference type="eggNOG" id="arCOG00570">
    <property type="taxonomic scope" value="Archaea"/>
</dbReference>
<dbReference type="HOGENOM" id="CLU_024648_5_0_2"/>
<dbReference type="GO" id="GO:0071949">
    <property type="term" value="F:FAD binding"/>
    <property type="evidence" value="ECO:0007669"/>
    <property type="project" value="InterPro"/>
</dbReference>
<dbReference type="GO" id="GO:0016628">
    <property type="term" value="F:oxidoreductase activity, acting on the CH-CH group of donors, NAD or NADP as acceptor"/>
    <property type="evidence" value="ECO:0007669"/>
    <property type="project" value="InterPro"/>
</dbReference>
<dbReference type="Gene3D" id="3.50.50.60">
    <property type="entry name" value="FAD/NAD(P)-binding domain"/>
    <property type="match status" value="1"/>
</dbReference>
<dbReference type="InterPro" id="IPR002938">
    <property type="entry name" value="FAD-bd"/>
</dbReference>
<dbReference type="InterPro" id="IPR036188">
    <property type="entry name" value="FAD/NAD-bd_sf"/>
</dbReference>
<dbReference type="InterPro" id="IPR011777">
    <property type="entry name" value="Geranylgeranyl_Rdtase_fam"/>
</dbReference>
<dbReference type="InterPro" id="IPR050407">
    <property type="entry name" value="Geranylgeranyl_reductase"/>
</dbReference>
<dbReference type="InterPro" id="IPR054715">
    <property type="entry name" value="GGR_cat"/>
</dbReference>
<dbReference type="NCBIfam" id="TIGR02032">
    <property type="entry name" value="GG-red-SF"/>
    <property type="match status" value="1"/>
</dbReference>
<dbReference type="PANTHER" id="PTHR42685:SF22">
    <property type="entry name" value="CONDITIONED MEDIUM FACTOR RECEPTOR 1"/>
    <property type="match status" value="1"/>
</dbReference>
<dbReference type="PANTHER" id="PTHR42685">
    <property type="entry name" value="GERANYLGERANYL DIPHOSPHATE REDUCTASE"/>
    <property type="match status" value="1"/>
</dbReference>
<dbReference type="Pfam" id="PF01494">
    <property type="entry name" value="FAD_binding_3"/>
    <property type="match status" value="1"/>
</dbReference>
<dbReference type="Pfam" id="PF22578">
    <property type="entry name" value="GGR_cat"/>
    <property type="match status" value="1"/>
</dbReference>
<dbReference type="PRINTS" id="PR00420">
    <property type="entry name" value="RNGMNOXGNASE"/>
</dbReference>
<dbReference type="SUPFAM" id="SSF51905">
    <property type="entry name" value="FAD/NAD(P)-binding domain"/>
    <property type="match status" value="1"/>
</dbReference>
<feature type="chain" id="PRO_0000219668" description="Uncharacterized protein Mbar_A1602">
    <location>
        <begin position="1"/>
        <end position="387"/>
    </location>
</feature>
<feature type="sequence conflict" description="In Ref. 2; CAA70994." evidence="1" ref="2">
    <original>V</original>
    <variation>I</variation>
    <location>
        <position position="236"/>
    </location>
</feature>
<evidence type="ECO:0000305" key="1"/>
<comment type="similarity">
    <text evidence="1">Belongs to the geranylgeranyl reductase family. ChlP subfamily.</text>
</comment>
<comment type="sequence caution" evidence="1">
    <conflict type="frameshift">
        <sequence resource="EMBL-CDS" id="CAA70994"/>
    </conflict>
</comment>
<name>Y1602_METBF</name>
<gene>
    <name type="ordered locus">Mbar_A1602</name>
</gene>
<reference key="1">
    <citation type="journal article" date="2006" name="J. Bacteriol.">
        <title>The Methanosarcina barkeri genome: comparative analysis with Methanosarcina acetivorans and Methanosarcina mazei reveals extensive rearrangement within methanosarcinal genomes.</title>
        <authorList>
            <person name="Maeder D.L."/>
            <person name="Anderson I."/>
            <person name="Brettin T.S."/>
            <person name="Bruce D.C."/>
            <person name="Gilna P."/>
            <person name="Han C.S."/>
            <person name="Lapidus A."/>
            <person name="Metcalf W.W."/>
            <person name="Saunders E."/>
            <person name="Tapia R."/>
            <person name="Sowers K.R."/>
        </authorList>
    </citation>
    <scope>NUCLEOTIDE SEQUENCE [LARGE SCALE GENOMIC DNA]</scope>
    <source>
        <strain>Fusaro / DSM 804</strain>
    </source>
</reference>
<reference key="2">
    <citation type="journal article" date="1997" name="Eur. J. Biochem.">
        <title>Heterodisulfide reductase from methanol-grown cells of Methanosarcina barkeri is not a flavoenzyme.</title>
        <authorList>
            <person name="Kuenkel A."/>
            <person name="Vaupel M."/>
            <person name="Heim S."/>
            <person name="Thauer R.K."/>
            <person name="Hedderich R."/>
        </authorList>
    </citation>
    <scope>NUCLEOTIDE SEQUENCE [GENOMIC DNA] OF 1-293</scope>
</reference>
<protein>
    <recommendedName>
        <fullName>Uncharacterized protein Mbar_A1602</fullName>
    </recommendedName>
    <alternativeName>
        <fullName>ORF3</fullName>
    </alternativeName>
</protein>
<organism>
    <name type="scientific">Methanosarcina barkeri (strain Fusaro / DSM 804)</name>
    <dbReference type="NCBI Taxonomy" id="269797"/>
    <lineage>
        <taxon>Archaea</taxon>
        <taxon>Methanobacteriati</taxon>
        <taxon>Methanobacteriota</taxon>
        <taxon>Stenosarchaea group</taxon>
        <taxon>Methanomicrobia</taxon>
        <taxon>Methanosarcinales</taxon>
        <taxon>Methanosarcinaceae</taxon>
        <taxon>Methanosarcina</taxon>
    </lineage>
</organism>
<sequence length="387" mass="43769">MISMKKYDVVIIGAGPAGSYAAYMLAKSKINVLVIDKYSFPRYKPCAGGLTAKAFNSFDFPISKEVKYSTNSIVTSYKNQIFHNISGNKTLVKMIERKEFDDFLIKKAVDSGATFLDGMKVTEITWENAEFSIKTDSEFFRCNYLIGADGTNGIVNRTFNIVERDLYGFAVEINCPVSRDNIGKFNMTFDFGTVPNGYLWIFPKDEYVCVGAYTTNRKMKNIQKYLLDYIEKLGLVPESEKLKGHIIPYYGINYKQPDFPCVLVGDAAGFGEYWTGEGIYYAVKSGTIAAEVISSSIKSGIFDRQALQRRYQREIIRGLKLAYYIGKFFYGNLPLSFNLVMSYLPVGIMYESASRGLTFDQSFSKIHVALSSLILNKSHISNNKYHR</sequence>
<proteinExistence type="inferred from homology"/>